<keyword id="KW-1003">Cell membrane</keyword>
<keyword id="KW-0961">Cell wall biogenesis/degradation</keyword>
<keyword id="KW-0325">Glycoprotein</keyword>
<keyword id="KW-0472">Membrane</keyword>
<keyword id="KW-1185">Reference proteome</keyword>
<keyword id="KW-0812">Transmembrane</keyword>
<keyword id="KW-1133">Transmembrane helix</keyword>
<gene>
    <name type="primary">CASP5</name>
    <name type="ordered locus">At5g15290</name>
    <name type="ORF">F8M21_180</name>
</gene>
<protein>
    <recommendedName>
        <fullName>Casparian strip membrane protein 5</fullName>
        <shortName>AtCASP5</shortName>
    </recommendedName>
</protein>
<accession>Q9LXF3</accession>
<proteinExistence type="evidence at protein level"/>
<feature type="chain" id="PRO_0000308685" description="Casparian strip membrane protein 5">
    <location>
        <begin position="1"/>
        <end position="187"/>
    </location>
</feature>
<feature type="topological domain" description="Cytoplasmic" evidence="1">
    <location>
        <begin position="1"/>
        <end position="24"/>
    </location>
</feature>
<feature type="transmembrane region" description="Helical" evidence="1">
    <location>
        <begin position="25"/>
        <end position="45"/>
    </location>
</feature>
<feature type="topological domain" description="Extracellular" evidence="1">
    <location>
        <begin position="46"/>
        <end position="74"/>
    </location>
</feature>
<feature type="transmembrane region" description="Helical" evidence="1">
    <location>
        <begin position="75"/>
        <end position="95"/>
    </location>
</feature>
<feature type="topological domain" description="Cytoplasmic" evidence="1">
    <location>
        <begin position="96"/>
        <end position="107"/>
    </location>
</feature>
<feature type="transmembrane region" description="Helical" evidence="1">
    <location>
        <begin position="108"/>
        <end position="128"/>
    </location>
</feature>
<feature type="topological domain" description="Extracellular" evidence="1">
    <location>
        <begin position="129"/>
        <end position="161"/>
    </location>
</feature>
<feature type="transmembrane region" description="Helical" evidence="1">
    <location>
        <begin position="162"/>
        <end position="182"/>
    </location>
</feature>
<feature type="topological domain" description="Cytoplasmic" evidence="1">
    <location>
        <begin position="183"/>
        <end position="187"/>
    </location>
</feature>
<feature type="glycosylation site" description="N-linked (GlcNAc...) asparagine" evidence="1">
    <location>
        <position position="140"/>
    </location>
</feature>
<name>CASP5_ARATH</name>
<dbReference type="EMBL" id="AL353993">
    <property type="protein sequence ID" value="CAB89339.1"/>
    <property type="molecule type" value="Genomic_DNA"/>
</dbReference>
<dbReference type="EMBL" id="CP002688">
    <property type="protein sequence ID" value="AED92144.1"/>
    <property type="molecule type" value="Genomic_DNA"/>
</dbReference>
<dbReference type="EMBL" id="AK117342">
    <property type="protein sequence ID" value="BAC42012.1"/>
    <property type="molecule type" value="mRNA"/>
</dbReference>
<dbReference type="EMBL" id="BT003725">
    <property type="protein sequence ID" value="AAO39953.1"/>
    <property type="molecule type" value="mRNA"/>
</dbReference>
<dbReference type="PIR" id="T49964">
    <property type="entry name" value="T49964"/>
</dbReference>
<dbReference type="RefSeq" id="NP_197033.1">
    <property type="nucleotide sequence ID" value="NM_121533.4"/>
</dbReference>
<dbReference type="SMR" id="Q9LXF3"/>
<dbReference type="BioGRID" id="16658">
    <property type="interactions" value="1"/>
</dbReference>
<dbReference type="DIP" id="DIP-59181N"/>
<dbReference type="FunCoup" id="Q9LXF3">
    <property type="interactions" value="3"/>
</dbReference>
<dbReference type="IntAct" id="Q9LXF3">
    <property type="interactions" value="4"/>
</dbReference>
<dbReference type="STRING" id="3702.Q9LXF3"/>
<dbReference type="GlyCosmos" id="Q9LXF3">
    <property type="glycosylation" value="1 site, No reported glycans"/>
</dbReference>
<dbReference type="GlyGen" id="Q9LXF3">
    <property type="glycosylation" value="1 site"/>
</dbReference>
<dbReference type="PaxDb" id="3702-AT5G15290.1"/>
<dbReference type="ProteomicsDB" id="240252"/>
<dbReference type="EnsemblPlants" id="AT5G15290.1">
    <property type="protein sequence ID" value="AT5G15290.1"/>
    <property type="gene ID" value="AT5G15290"/>
</dbReference>
<dbReference type="GeneID" id="831381"/>
<dbReference type="Gramene" id="AT5G15290.1">
    <property type="protein sequence ID" value="AT5G15290.1"/>
    <property type="gene ID" value="AT5G15290"/>
</dbReference>
<dbReference type="KEGG" id="ath:AT5G15290"/>
<dbReference type="Araport" id="AT5G15290"/>
<dbReference type="TAIR" id="AT5G15290">
    <property type="gene designation" value="CASP5"/>
</dbReference>
<dbReference type="eggNOG" id="ENOG502RXTK">
    <property type="taxonomic scope" value="Eukaryota"/>
</dbReference>
<dbReference type="HOGENOM" id="CLU_066104_3_2_1"/>
<dbReference type="InParanoid" id="Q9LXF3"/>
<dbReference type="OMA" id="ANWLSIC"/>
<dbReference type="PhylomeDB" id="Q9LXF3"/>
<dbReference type="PRO" id="PR:Q9LXF3"/>
<dbReference type="Proteomes" id="UP000006548">
    <property type="component" value="Chromosome 5"/>
</dbReference>
<dbReference type="ExpressionAtlas" id="Q9LXF3">
    <property type="expression patterns" value="baseline and differential"/>
</dbReference>
<dbReference type="GO" id="GO:0048226">
    <property type="term" value="C:Casparian strip"/>
    <property type="evidence" value="ECO:0000314"/>
    <property type="project" value="UniProtKB"/>
</dbReference>
<dbReference type="GO" id="GO:0005886">
    <property type="term" value="C:plasma membrane"/>
    <property type="evidence" value="ECO:0000314"/>
    <property type="project" value="UniProtKB"/>
</dbReference>
<dbReference type="GO" id="GO:0042803">
    <property type="term" value="F:protein homodimerization activity"/>
    <property type="evidence" value="ECO:0000250"/>
    <property type="project" value="UniProtKB"/>
</dbReference>
<dbReference type="GO" id="GO:0042545">
    <property type="term" value="P:cell wall modification"/>
    <property type="evidence" value="ECO:0000315"/>
    <property type="project" value="UniProtKB"/>
</dbReference>
<dbReference type="GO" id="GO:0007043">
    <property type="term" value="P:cell-cell junction assembly"/>
    <property type="evidence" value="ECO:0000314"/>
    <property type="project" value="UniProtKB"/>
</dbReference>
<dbReference type="InterPro" id="IPR006459">
    <property type="entry name" value="CASP/CASPL"/>
</dbReference>
<dbReference type="InterPro" id="IPR006702">
    <property type="entry name" value="CASP_dom"/>
</dbReference>
<dbReference type="InterPro" id="IPR044173">
    <property type="entry name" value="CASPL"/>
</dbReference>
<dbReference type="NCBIfam" id="TIGR01569">
    <property type="entry name" value="A_tha_TIGR01569"/>
    <property type="match status" value="1"/>
</dbReference>
<dbReference type="PANTHER" id="PTHR36488:SF12">
    <property type="entry name" value="CASP-LIKE PROTEIN"/>
    <property type="match status" value="1"/>
</dbReference>
<dbReference type="PANTHER" id="PTHR36488">
    <property type="entry name" value="CASP-LIKE PROTEIN 1U1"/>
    <property type="match status" value="1"/>
</dbReference>
<dbReference type="Pfam" id="PF04535">
    <property type="entry name" value="CASP_dom"/>
    <property type="match status" value="1"/>
</dbReference>
<sequence length="187" mass="20583">MKSGQAEIMETSKGIQKSGLMSRRIAILEFILRIVAFFNTIGSAILMGTTHETLPFFTQFIRFQAEYNDLPALTFFVVANAVVSGYLILSLTLAFVHIVKRKTQNTRILLIILDVAMLGLLTSGASSAAAIVYLAHNGNNKTNWFAICQQFNSFCERISGSLIGSFIAIVLLILLILLSAIALSRRH</sequence>
<reference key="1">
    <citation type="journal article" date="2000" name="Nature">
        <title>Sequence and analysis of chromosome 5 of the plant Arabidopsis thaliana.</title>
        <authorList>
            <person name="Tabata S."/>
            <person name="Kaneko T."/>
            <person name="Nakamura Y."/>
            <person name="Kotani H."/>
            <person name="Kato T."/>
            <person name="Asamizu E."/>
            <person name="Miyajima N."/>
            <person name="Sasamoto S."/>
            <person name="Kimura T."/>
            <person name="Hosouchi T."/>
            <person name="Kawashima K."/>
            <person name="Kohara M."/>
            <person name="Matsumoto M."/>
            <person name="Matsuno A."/>
            <person name="Muraki A."/>
            <person name="Nakayama S."/>
            <person name="Nakazaki N."/>
            <person name="Naruo K."/>
            <person name="Okumura S."/>
            <person name="Shinpo S."/>
            <person name="Takeuchi C."/>
            <person name="Wada T."/>
            <person name="Watanabe A."/>
            <person name="Yamada M."/>
            <person name="Yasuda M."/>
            <person name="Sato S."/>
            <person name="de la Bastide M."/>
            <person name="Huang E."/>
            <person name="Spiegel L."/>
            <person name="Gnoj L."/>
            <person name="O'Shaughnessy A."/>
            <person name="Preston R."/>
            <person name="Habermann K."/>
            <person name="Murray J."/>
            <person name="Johnson D."/>
            <person name="Rohlfing T."/>
            <person name="Nelson J."/>
            <person name="Stoneking T."/>
            <person name="Pepin K."/>
            <person name="Spieth J."/>
            <person name="Sekhon M."/>
            <person name="Armstrong J."/>
            <person name="Becker M."/>
            <person name="Belter E."/>
            <person name="Cordum H."/>
            <person name="Cordes M."/>
            <person name="Courtney L."/>
            <person name="Courtney W."/>
            <person name="Dante M."/>
            <person name="Du H."/>
            <person name="Edwards J."/>
            <person name="Fryman J."/>
            <person name="Haakensen B."/>
            <person name="Lamar E."/>
            <person name="Latreille P."/>
            <person name="Leonard S."/>
            <person name="Meyer R."/>
            <person name="Mulvaney E."/>
            <person name="Ozersky P."/>
            <person name="Riley A."/>
            <person name="Strowmatt C."/>
            <person name="Wagner-McPherson C."/>
            <person name="Wollam A."/>
            <person name="Yoakum M."/>
            <person name="Bell M."/>
            <person name="Dedhia N."/>
            <person name="Parnell L."/>
            <person name="Shah R."/>
            <person name="Rodriguez M."/>
            <person name="Hoon See L."/>
            <person name="Vil D."/>
            <person name="Baker J."/>
            <person name="Kirchoff K."/>
            <person name="Toth K."/>
            <person name="King L."/>
            <person name="Bahret A."/>
            <person name="Miller B."/>
            <person name="Marra M.A."/>
            <person name="Martienssen R."/>
            <person name="McCombie W.R."/>
            <person name="Wilson R.K."/>
            <person name="Murphy G."/>
            <person name="Bancroft I."/>
            <person name="Volckaert G."/>
            <person name="Wambutt R."/>
            <person name="Duesterhoeft A."/>
            <person name="Stiekema W."/>
            <person name="Pohl T."/>
            <person name="Entian K.-D."/>
            <person name="Terryn N."/>
            <person name="Hartley N."/>
            <person name="Bent E."/>
            <person name="Johnson S."/>
            <person name="Langham S.-A."/>
            <person name="McCullagh B."/>
            <person name="Robben J."/>
            <person name="Grymonprez B."/>
            <person name="Zimmermann W."/>
            <person name="Ramsperger U."/>
            <person name="Wedler H."/>
            <person name="Balke K."/>
            <person name="Wedler E."/>
            <person name="Peters S."/>
            <person name="van Staveren M."/>
            <person name="Dirkse W."/>
            <person name="Mooijman P."/>
            <person name="Klein Lankhorst R."/>
            <person name="Weitzenegger T."/>
            <person name="Bothe G."/>
            <person name="Rose M."/>
            <person name="Hauf J."/>
            <person name="Berneiser S."/>
            <person name="Hempel S."/>
            <person name="Feldpausch M."/>
            <person name="Lamberth S."/>
            <person name="Villarroel R."/>
            <person name="Gielen J."/>
            <person name="Ardiles W."/>
            <person name="Bents O."/>
            <person name="Lemcke K."/>
            <person name="Kolesov G."/>
            <person name="Mayer K.F.X."/>
            <person name="Rudd S."/>
            <person name="Schoof H."/>
            <person name="Schueller C."/>
            <person name="Zaccaria P."/>
            <person name="Mewes H.-W."/>
            <person name="Bevan M."/>
            <person name="Fransz P.F."/>
        </authorList>
    </citation>
    <scope>NUCLEOTIDE SEQUENCE [LARGE SCALE GENOMIC DNA]</scope>
    <source>
        <strain>cv. Columbia</strain>
    </source>
</reference>
<reference key="2">
    <citation type="journal article" date="2017" name="Plant J.">
        <title>Araport11: a complete reannotation of the Arabidopsis thaliana reference genome.</title>
        <authorList>
            <person name="Cheng C.Y."/>
            <person name="Krishnakumar V."/>
            <person name="Chan A.P."/>
            <person name="Thibaud-Nissen F."/>
            <person name="Schobel S."/>
            <person name="Town C.D."/>
        </authorList>
    </citation>
    <scope>GENOME REANNOTATION</scope>
    <source>
        <strain>cv. Columbia</strain>
    </source>
</reference>
<reference key="3">
    <citation type="journal article" date="2002" name="Science">
        <title>Functional annotation of a full-length Arabidopsis cDNA collection.</title>
        <authorList>
            <person name="Seki M."/>
            <person name="Narusaka M."/>
            <person name="Kamiya A."/>
            <person name="Ishida J."/>
            <person name="Satou M."/>
            <person name="Sakurai T."/>
            <person name="Nakajima M."/>
            <person name="Enju A."/>
            <person name="Akiyama K."/>
            <person name="Oono Y."/>
            <person name="Muramatsu M."/>
            <person name="Hayashizaki Y."/>
            <person name="Kawai J."/>
            <person name="Carninci P."/>
            <person name="Itoh M."/>
            <person name="Ishii Y."/>
            <person name="Arakawa T."/>
            <person name="Shibata K."/>
            <person name="Shinagawa A."/>
            <person name="Shinozaki K."/>
        </authorList>
    </citation>
    <scope>NUCLEOTIDE SEQUENCE [LARGE SCALE MRNA]</scope>
    <source>
        <strain>cv. Columbia</strain>
    </source>
</reference>
<reference key="4">
    <citation type="journal article" date="2003" name="Science">
        <title>Empirical analysis of transcriptional activity in the Arabidopsis genome.</title>
        <authorList>
            <person name="Yamada K."/>
            <person name="Lim J."/>
            <person name="Dale J.M."/>
            <person name="Chen H."/>
            <person name="Shinn P."/>
            <person name="Palm C.J."/>
            <person name="Southwick A.M."/>
            <person name="Wu H.C."/>
            <person name="Kim C.J."/>
            <person name="Nguyen M."/>
            <person name="Pham P.K."/>
            <person name="Cheuk R.F."/>
            <person name="Karlin-Newmann G."/>
            <person name="Liu S.X."/>
            <person name="Lam B."/>
            <person name="Sakano H."/>
            <person name="Wu T."/>
            <person name="Yu G."/>
            <person name="Miranda M."/>
            <person name="Quach H.L."/>
            <person name="Tripp M."/>
            <person name="Chang C.H."/>
            <person name="Lee J.M."/>
            <person name="Toriumi M.J."/>
            <person name="Chan M.M."/>
            <person name="Tang C.C."/>
            <person name="Onodera C.S."/>
            <person name="Deng J.M."/>
            <person name="Akiyama K."/>
            <person name="Ansari Y."/>
            <person name="Arakawa T."/>
            <person name="Banh J."/>
            <person name="Banno F."/>
            <person name="Bowser L."/>
            <person name="Brooks S.Y."/>
            <person name="Carninci P."/>
            <person name="Chao Q."/>
            <person name="Choy N."/>
            <person name="Enju A."/>
            <person name="Goldsmith A.D."/>
            <person name="Gurjal M."/>
            <person name="Hansen N.F."/>
            <person name="Hayashizaki Y."/>
            <person name="Johnson-Hopson C."/>
            <person name="Hsuan V.W."/>
            <person name="Iida K."/>
            <person name="Karnes M."/>
            <person name="Khan S."/>
            <person name="Koesema E."/>
            <person name="Ishida J."/>
            <person name="Jiang P.X."/>
            <person name="Jones T."/>
            <person name="Kawai J."/>
            <person name="Kamiya A."/>
            <person name="Meyers C."/>
            <person name="Nakajima M."/>
            <person name="Narusaka M."/>
            <person name="Seki M."/>
            <person name="Sakurai T."/>
            <person name="Satou M."/>
            <person name="Tamse R."/>
            <person name="Vaysberg M."/>
            <person name="Wallender E.K."/>
            <person name="Wong C."/>
            <person name="Yamamura Y."/>
            <person name="Yuan S."/>
            <person name="Shinozaki K."/>
            <person name="Davis R.W."/>
            <person name="Theologis A."/>
            <person name="Ecker J.R."/>
        </authorList>
    </citation>
    <scope>NUCLEOTIDE SEQUENCE [LARGE SCALE MRNA]</scope>
    <source>
        <strain>cv. Columbia</strain>
    </source>
</reference>
<reference key="5">
    <citation type="journal article" date="2011" name="Nature">
        <title>A novel protein family directs Casparian strip formation in the endodermis.</title>
        <authorList>
            <person name="Roppolo D."/>
            <person name="De Rybel B."/>
            <person name="Denervaud Tendon V."/>
            <person name="Pfister A."/>
            <person name="Alassimone J."/>
            <person name="Vermeer J.E.M."/>
            <person name="Yamazaki M."/>
            <person name="Stierhof Y.-D."/>
            <person name="Beeckman T."/>
            <person name="Geldner N."/>
        </authorList>
    </citation>
    <scope>FUNCTION</scope>
    <scope>SUBCELLULAR LOCATION</scope>
    <scope>DIMERIZATION</scope>
    <scope>INTERACTION WITH CASP1; CASP3 AND CASP4</scope>
    <source>
        <strain>cv. Columbia</strain>
    </source>
</reference>
<reference key="6">
    <citation type="journal article" date="2014" name="Plant Physiol.">
        <title>Functional and evolutionary analysis of the CASPARIAN STRIP MEMBRANE DOMAIN PROTEIN family.</title>
        <authorList>
            <person name="Roppolo D."/>
            <person name="Boeckmann B."/>
            <person name="Pfister A."/>
            <person name="Boutet E."/>
            <person name="Rubio M.C."/>
            <person name="Denervaud-Tendon V."/>
            <person name="Vermeer J.E."/>
            <person name="Gheyselinck J."/>
            <person name="Xenarios I."/>
            <person name="Geldner N."/>
        </authorList>
    </citation>
    <scope>GENE FAMILY</scope>
    <scope>NOMENCLATURE</scope>
</reference>
<evidence type="ECO:0000255" key="1"/>
<evidence type="ECO:0000269" key="2">
    <source>
    </source>
</evidence>
<evidence type="ECO:0000305" key="3"/>
<organism>
    <name type="scientific">Arabidopsis thaliana</name>
    <name type="common">Mouse-ear cress</name>
    <dbReference type="NCBI Taxonomy" id="3702"/>
    <lineage>
        <taxon>Eukaryota</taxon>
        <taxon>Viridiplantae</taxon>
        <taxon>Streptophyta</taxon>
        <taxon>Embryophyta</taxon>
        <taxon>Tracheophyta</taxon>
        <taxon>Spermatophyta</taxon>
        <taxon>Magnoliopsida</taxon>
        <taxon>eudicotyledons</taxon>
        <taxon>Gunneridae</taxon>
        <taxon>Pentapetalae</taxon>
        <taxon>rosids</taxon>
        <taxon>malvids</taxon>
        <taxon>Brassicales</taxon>
        <taxon>Brassicaceae</taxon>
        <taxon>Camelineae</taxon>
        <taxon>Arabidopsis</taxon>
    </lineage>
</organism>
<comment type="function">
    <text evidence="2">Regulates membrane-cell wall junctions and localized cell wall deposition. Required for establishment of the Casparian strip membrane domain (CSD) and the subsequent formation of Casparian strips, a cell wall modification of the root endodermis that determines an apoplastic barrier between the intraorganismal apoplasm and the extraorganismal apoplasm and prevents lateral diffusion.</text>
</comment>
<comment type="subunit">
    <text evidence="2">Homodimer and heterodimers with other CASP proteins. Interacts with CASP1, CASP3 and CASP4.</text>
</comment>
<comment type="subcellular location">
    <subcellularLocation>
        <location evidence="2">Cell membrane</location>
        <topology evidence="2">Multi-pass membrane protein</topology>
    </subcellularLocation>
    <text>Very restricted localization following a belt shape within the plasma membrane which coincides with the position of the Casparian strip membrane domain.</text>
</comment>
<comment type="similarity">
    <text evidence="3">Belongs to the Casparian strip membrane proteins (CASP) family.</text>
</comment>